<protein>
    <recommendedName>
        <fullName evidence="12">Divalent cation/proton antiporter GDT1</fullName>
    </recommendedName>
    <alternativeName>
        <fullName>GCR1-dependent translation factor 1</fullName>
    </alternativeName>
</protein>
<sequence length="280" mass="30341">MGNMIKKASLIALLPLFTAAAAAATDAETSMESGSSSHLKSFLMSVSMIGLSEIGDKTFLIAALMAMRHKRVLVFSAAATSLAIMTILSGVVGHSAVAFLSERYTAFFAGILFLVFGYKLTMEGLEMSKDAGVEEEMAEVEEEIAIKDMNQDMDDVEKGGDTAYDKQLKNASIGKKIVHRIRELASFMFSPVWVQIFLMVFLGELGDRSQISIIAMATDSDYWYVIAGAVIGHAICSGLAVVGGKLLATRISIRTITLASSLLFFIFALMYIYQAFTTQD</sequence>
<accession>P38301</accession>
<accession>D6VQI2</accession>
<accession>E9PAD4</accession>
<accession>Q6Q545</accession>
<dbReference type="EMBL" id="U02073">
    <property type="protein sequence ID" value="AAB60282.1"/>
    <property type="molecule type" value="Genomic_DNA"/>
</dbReference>
<dbReference type="EMBL" id="Z36056">
    <property type="protein sequence ID" value="CAA85148.1"/>
    <property type="molecule type" value="Genomic_DNA"/>
</dbReference>
<dbReference type="EMBL" id="Z36057">
    <property type="protein sequence ID" value="CAA85150.1"/>
    <property type="molecule type" value="Genomic_DNA"/>
</dbReference>
<dbReference type="EMBL" id="AY558567">
    <property type="protein sequence ID" value="AAS56893.1"/>
    <property type="molecule type" value="Genomic_DNA"/>
</dbReference>
<dbReference type="EMBL" id="BK006936">
    <property type="protein sequence ID" value="DAA07302.1"/>
    <property type="molecule type" value="Genomic_DNA"/>
</dbReference>
<dbReference type="PIR" id="S46059">
    <property type="entry name" value="S46059"/>
</dbReference>
<dbReference type="RefSeq" id="NP_009746.1">
    <property type="nucleotide sequence ID" value="NM_001178535.1"/>
</dbReference>
<dbReference type="BioGRID" id="32885">
    <property type="interactions" value="101"/>
</dbReference>
<dbReference type="DIP" id="DIP-3804N"/>
<dbReference type="FunCoup" id="P38301">
    <property type="interactions" value="825"/>
</dbReference>
<dbReference type="IntAct" id="P38301">
    <property type="interactions" value="19"/>
</dbReference>
<dbReference type="MINT" id="P38301"/>
<dbReference type="STRING" id="4932.YBR187W"/>
<dbReference type="TCDB" id="2.A.106.2.3">
    <property type="family name" value="the ca(2+):h(+) antiporter-2 (caca2) family"/>
</dbReference>
<dbReference type="iPTMnet" id="P38301"/>
<dbReference type="PaxDb" id="4932-YBR187W"/>
<dbReference type="PeptideAtlas" id="P38301"/>
<dbReference type="EnsemblFungi" id="YBR187W_mRNA">
    <property type="protein sequence ID" value="YBR187W"/>
    <property type="gene ID" value="YBR187W"/>
</dbReference>
<dbReference type="GeneID" id="852485"/>
<dbReference type="KEGG" id="sce:YBR187W"/>
<dbReference type="AGR" id="SGD:S000000391"/>
<dbReference type="SGD" id="S000000391">
    <property type="gene designation" value="GDT1"/>
</dbReference>
<dbReference type="VEuPathDB" id="FungiDB:YBR187W"/>
<dbReference type="eggNOG" id="KOG2881">
    <property type="taxonomic scope" value="Eukaryota"/>
</dbReference>
<dbReference type="GeneTree" id="ENSGT00390000005261"/>
<dbReference type="HOGENOM" id="CLU_040186_0_0_1"/>
<dbReference type="InParanoid" id="P38301"/>
<dbReference type="OMA" id="ILGHAIC"/>
<dbReference type="OrthoDB" id="442680at2759"/>
<dbReference type="BioCyc" id="YEAST:G3O-29130-MONOMER"/>
<dbReference type="BioGRID-ORCS" id="852485">
    <property type="hits" value="1 hit in 10 CRISPR screens"/>
</dbReference>
<dbReference type="PRO" id="PR:P38301"/>
<dbReference type="Proteomes" id="UP000002311">
    <property type="component" value="Chromosome II"/>
</dbReference>
<dbReference type="RNAct" id="P38301">
    <property type="molecule type" value="protein"/>
</dbReference>
<dbReference type="GO" id="GO:0005801">
    <property type="term" value="C:cis-Golgi network"/>
    <property type="evidence" value="ECO:0000314"/>
    <property type="project" value="SGD"/>
</dbReference>
<dbReference type="GO" id="GO:0000324">
    <property type="term" value="C:fungal-type vacuole"/>
    <property type="evidence" value="ECO:0000314"/>
    <property type="project" value="SGD"/>
</dbReference>
<dbReference type="GO" id="GO:0000329">
    <property type="term" value="C:fungal-type vacuole membrane"/>
    <property type="evidence" value="ECO:0007005"/>
    <property type="project" value="SGD"/>
</dbReference>
<dbReference type="GO" id="GO:0005794">
    <property type="term" value="C:Golgi apparatus"/>
    <property type="evidence" value="ECO:0000314"/>
    <property type="project" value="UniProtKB"/>
</dbReference>
<dbReference type="GO" id="GO:0005797">
    <property type="term" value="C:Golgi medial cisterna"/>
    <property type="evidence" value="ECO:0000314"/>
    <property type="project" value="SGD"/>
</dbReference>
<dbReference type="GO" id="GO:0015085">
    <property type="term" value="F:calcium ion transmembrane transporter activity"/>
    <property type="evidence" value="ECO:0000314"/>
    <property type="project" value="SGD"/>
</dbReference>
<dbReference type="GO" id="GO:0015369">
    <property type="term" value="F:calcium:proton antiporter activity"/>
    <property type="evidence" value="ECO:0000314"/>
    <property type="project" value="UniProtKB"/>
</dbReference>
<dbReference type="GO" id="GO:0005384">
    <property type="term" value="F:manganese ion transmembrane transporter activity"/>
    <property type="evidence" value="ECO:0000314"/>
    <property type="project" value="SGD"/>
</dbReference>
<dbReference type="GO" id="GO:0010486">
    <property type="term" value="F:manganese:proton antiporter activity"/>
    <property type="evidence" value="ECO:0000314"/>
    <property type="project" value="UniProtKB"/>
</dbReference>
<dbReference type="GO" id="GO:0070588">
    <property type="term" value="P:calcium ion transmembrane transport"/>
    <property type="evidence" value="ECO:0000314"/>
    <property type="project" value="SGD"/>
</dbReference>
<dbReference type="GO" id="GO:0032468">
    <property type="term" value="P:Golgi calcium ion homeostasis"/>
    <property type="evidence" value="ECO:0000315"/>
    <property type="project" value="SGD"/>
</dbReference>
<dbReference type="GO" id="GO:0032472">
    <property type="term" value="P:Golgi calcium ion transport"/>
    <property type="evidence" value="ECO:0000318"/>
    <property type="project" value="GO_Central"/>
</dbReference>
<dbReference type="GO" id="GO:0006874">
    <property type="term" value="P:intracellular calcium ion homeostasis"/>
    <property type="evidence" value="ECO:0000315"/>
    <property type="project" value="UniProtKB"/>
</dbReference>
<dbReference type="GO" id="GO:0030026">
    <property type="term" value="P:intracellular manganese ion homeostasis"/>
    <property type="evidence" value="ECO:0000315"/>
    <property type="project" value="SGD"/>
</dbReference>
<dbReference type="GO" id="GO:0071421">
    <property type="term" value="P:manganese ion transmembrane transport"/>
    <property type="evidence" value="ECO:0000314"/>
    <property type="project" value="SGD"/>
</dbReference>
<dbReference type="InterPro" id="IPR001727">
    <property type="entry name" value="GDT1-like"/>
</dbReference>
<dbReference type="InterPro" id="IPR049555">
    <property type="entry name" value="GDT1-like_CS"/>
</dbReference>
<dbReference type="PANTHER" id="PTHR12608:SF1">
    <property type="entry name" value="TRANSMEMBRANE PROTEIN 165"/>
    <property type="match status" value="1"/>
</dbReference>
<dbReference type="PANTHER" id="PTHR12608">
    <property type="entry name" value="TRANSMEMBRANE PROTEIN HTP-1 RELATED"/>
    <property type="match status" value="1"/>
</dbReference>
<dbReference type="Pfam" id="PF01169">
    <property type="entry name" value="GDT1"/>
    <property type="match status" value="2"/>
</dbReference>
<dbReference type="PROSITE" id="PS01214">
    <property type="entry name" value="UPF0016"/>
    <property type="match status" value="1"/>
</dbReference>
<name>GDT1_YEAST</name>
<proteinExistence type="evidence at protein level"/>
<feature type="chain" id="PRO_0000212467" description="Divalent cation/proton antiporter GDT1">
    <location>
        <begin position="1"/>
        <end position="280"/>
    </location>
</feature>
<feature type="topological domain" description="Cytoplasmic" evidence="1">
    <location>
        <begin position="1"/>
        <end position="3"/>
    </location>
</feature>
<feature type="transmembrane region" description="Helical" evidence="1">
    <location>
        <begin position="4"/>
        <end position="24"/>
    </location>
</feature>
<feature type="topological domain" description="Vacuolar" evidence="1">
    <location>
        <begin position="25"/>
        <end position="45"/>
    </location>
</feature>
<feature type="transmembrane region" description="Helical" evidence="1">
    <location>
        <begin position="46"/>
        <end position="66"/>
    </location>
</feature>
<feature type="topological domain" description="Cytoplasmic" evidence="1">
    <location>
        <begin position="67"/>
        <end position="71"/>
    </location>
</feature>
<feature type="transmembrane region" description="Helical" evidence="1">
    <location>
        <begin position="72"/>
        <end position="92"/>
    </location>
</feature>
<feature type="topological domain" description="Vacuolar" evidence="1">
    <location>
        <begin position="93"/>
        <end position="104"/>
    </location>
</feature>
<feature type="transmembrane region" description="Helical" evidence="1">
    <location>
        <begin position="105"/>
        <end position="125"/>
    </location>
</feature>
<feature type="topological domain" description="Cytoplasmic" evidence="1">
    <location>
        <begin position="126"/>
        <end position="183"/>
    </location>
</feature>
<feature type="transmembrane region" description="Helical" evidence="1">
    <location>
        <begin position="184"/>
        <end position="204"/>
    </location>
</feature>
<feature type="topological domain" description="Vacuolar" evidence="1">
    <location>
        <begin position="205"/>
        <end position="222"/>
    </location>
</feature>
<feature type="transmembrane region" description="Helical" evidence="1">
    <location>
        <begin position="223"/>
        <end position="243"/>
    </location>
</feature>
<feature type="topological domain" description="Cytoplasmic" evidence="1">
    <location>
        <begin position="244"/>
        <end position="255"/>
    </location>
</feature>
<feature type="transmembrane region" description="Helical" evidence="1">
    <location>
        <begin position="256"/>
        <end position="276"/>
    </location>
</feature>
<feature type="topological domain" description="Vacuolar" evidence="1">
    <location>
        <begin position="277"/>
        <end position="280"/>
    </location>
</feature>
<feature type="mutagenesis site" description="Loss of function in calcium homeostasis." evidence="5">
    <original>R</original>
    <variation>C</variation>
    <variation>H</variation>
    <location>
        <position position="71"/>
    </location>
</feature>
<feature type="sequence conflict" description="In Ref. 4; AAS56893." evidence="10" ref="4">
    <original>K</original>
    <variation>E</variation>
    <location>
        <position position="158"/>
    </location>
</feature>
<comment type="function">
    <text evidence="4 6 7 8">Divalent cation:proton antiporter that exchanges calcium or manganese ions for protons across the Golgi membrane. Mediates the reversible transport of calcium or manganese to the Golgi lumen driven by the proton gradient and possibly the membrane potential generated by V-ATPase. Provides calcium or manganese cofactors to resident Golgi enzymes and contributes to the maintenance of an acidic luminal Golgi pH required for proper functioning of the secretory pathway. The transport stoichiometry remains to be elucidated.</text>
</comment>
<comment type="catalytic activity">
    <reaction evidence="8 11">
        <text>Ca(2+)(in) + n H(+)(out) = Ca(2+)(out) + n H(+)(in)</text>
        <dbReference type="Rhea" id="RHEA:76631"/>
        <dbReference type="ChEBI" id="CHEBI:15378"/>
        <dbReference type="ChEBI" id="CHEBI:29108"/>
    </reaction>
</comment>
<comment type="catalytic activity">
    <reaction evidence="8">
        <text>Mn(2+)(in) + n H(+)(out) = Mn(2+)(out) + n H(+)(in)</text>
        <dbReference type="Rhea" id="RHEA:76635"/>
        <dbReference type="ChEBI" id="CHEBI:15378"/>
        <dbReference type="ChEBI" id="CHEBI:29035"/>
    </reaction>
</comment>
<comment type="subcellular location">
    <subcellularLocation>
        <location evidence="4">Golgi apparatus</location>
        <location evidence="4">cis-Golgi network membrane</location>
        <topology evidence="1">Multi-pass membrane protein</topology>
    </subcellularLocation>
    <text evidence="4">Colocalizes with Gos1p in the medial-Golgi stacks.</text>
</comment>
<comment type="induction">
    <text evidence="3">Expression is GCR1-dependent. Promoter is also bound by the RAP1 transcription factor.</text>
</comment>
<comment type="disruption phenotype">
    <text evidence="4 6">Growth deficiency in the presence of high calcium concentrations.</text>
</comment>
<comment type="miscellaneous">
    <text evidence="2">Present with 2170 molecules/cell in log phase SD medium.</text>
</comment>
<comment type="similarity">
    <text evidence="10">Belongs to the GDT1 family.</text>
</comment>
<reference key="1">
    <citation type="journal article" date="1994" name="Yeast">
        <title>A 12.5 kb fragment of the yeast chromosome II contains two adjacent genes encoding ribosomal proteins and six putative new genes, one of which encodes a putative transcriptional factor.</title>
        <authorList>
            <person name="Demolis N."/>
            <person name="Jacquet M."/>
            <person name="Mallet L."/>
        </authorList>
    </citation>
    <scope>NUCLEOTIDE SEQUENCE [GENOMIC DNA]</scope>
    <source>
        <strain>ATCC 204508 / S288c</strain>
    </source>
</reference>
<reference key="2">
    <citation type="journal article" date="1994" name="EMBO J.">
        <title>Complete DNA sequence of yeast chromosome II.</title>
        <authorList>
            <person name="Feldmann H."/>
            <person name="Aigle M."/>
            <person name="Aljinovic G."/>
            <person name="Andre B."/>
            <person name="Baclet M.C."/>
            <person name="Barthe C."/>
            <person name="Baur A."/>
            <person name="Becam A.-M."/>
            <person name="Biteau N."/>
            <person name="Boles E."/>
            <person name="Brandt T."/>
            <person name="Brendel M."/>
            <person name="Brueckner M."/>
            <person name="Bussereau F."/>
            <person name="Christiansen C."/>
            <person name="Contreras R."/>
            <person name="Crouzet M."/>
            <person name="Cziepluch C."/>
            <person name="Demolis N."/>
            <person name="Delaveau T."/>
            <person name="Doignon F."/>
            <person name="Domdey H."/>
            <person name="Duesterhus S."/>
            <person name="Dubois E."/>
            <person name="Dujon B."/>
            <person name="El Bakkoury M."/>
            <person name="Entian K.-D."/>
            <person name="Feuermann M."/>
            <person name="Fiers W."/>
            <person name="Fobo G.M."/>
            <person name="Fritz C."/>
            <person name="Gassenhuber J."/>
            <person name="Glansdorff N."/>
            <person name="Goffeau A."/>
            <person name="Grivell L.A."/>
            <person name="de Haan M."/>
            <person name="Hein C."/>
            <person name="Herbert C.J."/>
            <person name="Hollenberg C.P."/>
            <person name="Holmstroem K."/>
            <person name="Jacq C."/>
            <person name="Jacquet M."/>
            <person name="Jauniaux J.-C."/>
            <person name="Jonniaux J.-L."/>
            <person name="Kallesoee T."/>
            <person name="Kiesau P."/>
            <person name="Kirchrath L."/>
            <person name="Koetter P."/>
            <person name="Korol S."/>
            <person name="Liebl S."/>
            <person name="Logghe M."/>
            <person name="Lohan A.J.E."/>
            <person name="Louis E.J."/>
            <person name="Li Z.Y."/>
            <person name="Maat M.J."/>
            <person name="Mallet L."/>
            <person name="Mannhaupt G."/>
            <person name="Messenguy F."/>
            <person name="Miosga T."/>
            <person name="Molemans F."/>
            <person name="Mueller S."/>
            <person name="Nasr F."/>
            <person name="Obermaier B."/>
            <person name="Perea J."/>
            <person name="Pierard A."/>
            <person name="Piravandi E."/>
            <person name="Pohl F.M."/>
            <person name="Pohl T.M."/>
            <person name="Potier S."/>
            <person name="Proft M."/>
            <person name="Purnelle B."/>
            <person name="Ramezani Rad M."/>
            <person name="Rieger M."/>
            <person name="Rose M."/>
            <person name="Schaaff-Gerstenschlaeger I."/>
            <person name="Scherens B."/>
            <person name="Schwarzlose C."/>
            <person name="Skala J."/>
            <person name="Slonimski P.P."/>
            <person name="Smits P.H.M."/>
            <person name="Souciet J.-L."/>
            <person name="Steensma H.Y."/>
            <person name="Stucka R."/>
            <person name="Urrestarazu L.A."/>
            <person name="van der Aart Q.J.M."/>
            <person name="Van Dyck L."/>
            <person name="Vassarotti A."/>
            <person name="Vetter I."/>
            <person name="Vierendeels F."/>
            <person name="Vissers S."/>
            <person name="Wagner G."/>
            <person name="de Wergifosse P."/>
            <person name="Wolfe K.H."/>
            <person name="Zagulski M."/>
            <person name="Zimmermann F.K."/>
            <person name="Mewes H.-W."/>
            <person name="Kleine K."/>
        </authorList>
    </citation>
    <scope>NUCLEOTIDE SEQUENCE [LARGE SCALE GENOMIC DNA]</scope>
    <source>
        <strain>ATCC 204508 / S288c</strain>
    </source>
</reference>
<reference key="3">
    <citation type="journal article" date="2014" name="G3 (Bethesda)">
        <title>The reference genome sequence of Saccharomyces cerevisiae: Then and now.</title>
        <authorList>
            <person name="Engel S.R."/>
            <person name="Dietrich F.S."/>
            <person name="Fisk D.G."/>
            <person name="Binkley G."/>
            <person name="Balakrishnan R."/>
            <person name="Costanzo M.C."/>
            <person name="Dwight S.S."/>
            <person name="Hitz B.C."/>
            <person name="Karra K."/>
            <person name="Nash R.S."/>
            <person name="Weng S."/>
            <person name="Wong E.D."/>
            <person name="Lloyd P."/>
            <person name="Skrzypek M.S."/>
            <person name="Miyasato S.R."/>
            <person name="Simison M."/>
            <person name="Cherry J.M."/>
        </authorList>
    </citation>
    <scope>GENOME REANNOTATION</scope>
    <source>
        <strain>ATCC 204508 / S288c</strain>
    </source>
</reference>
<reference key="4">
    <citation type="submission" date="2004-02" db="EMBL/GenBank/DDBJ databases">
        <authorList>
            <person name="Marsischky G."/>
            <person name="Rolfs A."/>
            <person name="Richardson A."/>
            <person name="Kane M."/>
            <person name="Baqui M."/>
            <person name="Taycher E."/>
            <person name="Hu Y."/>
            <person name="Vannberg F."/>
            <person name="Weger J."/>
            <person name="Kramer J."/>
            <person name="Moreira D."/>
            <person name="Kelley F."/>
            <person name="Zuo D."/>
            <person name="Raphael J."/>
            <person name="Hogle C."/>
            <person name="Jepson D."/>
            <person name="Williamson J."/>
            <person name="Camargo A."/>
            <person name="Gonzaga L."/>
            <person name="Vasconcelos A.T."/>
            <person name="Simpson A.J.G."/>
            <person name="Kolodner R."/>
            <person name="Harlow E."/>
            <person name="LaBaer J."/>
        </authorList>
    </citation>
    <scope>NUCLEOTIDE SEQUENCE [GENOMIC DNA]</scope>
    <source>
        <strain>ATCC 204508 / S288c</strain>
    </source>
</reference>
<reference key="5">
    <citation type="journal article" date="2003" name="Nature">
        <title>Global analysis of protein localization in budding yeast.</title>
        <authorList>
            <person name="Huh W.-K."/>
            <person name="Falvo J.V."/>
            <person name="Gerke L.C."/>
            <person name="Carroll A.S."/>
            <person name="Howson R.W."/>
            <person name="Weissman J.S."/>
            <person name="O'Shea E.K."/>
        </authorList>
    </citation>
    <scope>SUBCELLULAR LOCATION [LARGE SCALE ANALYSIS]</scope>
</reference>
<reference key="6">
    <citation type="journal article" date="2003" name="Nature">
        <title>Global analysis of protein expression in yeast.</title>
        <authorList>
            <person name="Ghaemmaghami S."/>
            <person name="Huh W.-K."/>
            <person name="Bower K."/>
            <person name="Howson R.W."/>
            <person name="Belle A."/>
            <person name="Dephoure N."/>
            <person name="O'Shea E.K."/>
            <person name="Weissman J.S."/>
        </authorList>
    </citation>
    <scope>LEVEL OF PROTEIN EXPRESSION [LARGE SCALE ANALYSIS]</scope>
</reference>
<reference key="7">
    <citation type="journal article" date="2006" name="Proc. Natl. Acad. Sci. U.S.A.">
        <title>A global topology map of the Saccharomyces cerevisiae membrane proteome.</title>
        <authorList>
            <person name="Kim H."/>
            <person name="Melen K."/>
            <person name="Oesterberg M."/>
            <person name="von Heijne G."/>
        </authorList>
    </citation>
    <scope>TOPOLOGY [LARGE SCALE ANALYSIS]</scope>
    <source>
        <strain>ATCC 208353 / W303-1A</strain>
    </source>
</reference>
<reference key="8">
    <citation type="journal article" date="2007" name="Mol. Genet. Genomics">
        <title>The transcription factor Gcr1 stimulates cell growth by participating in nutrient-responsive gene expression on a global level.</title>
        <authorList>
            <person name="Barbara K.E."/>
            <person name="Haley T.M."/>
            <person name="Willis K.A."/>
            <person name="Santangelo G.M."/>
        </authorList>
    </citation>
    <scope>INDUCTION</scope>
</reference>
<reference key="9">
    <citation type="journal article" date="2013" name="Hum. Mol. Genet.">
        <title>Impact of disease-causing mutations on TMEM165 subcellular localization, a recently identified protein involved in CDG-II.</title>
        <authorList>
            <person name="Rosnoblet C."/>
            <person name="Legrand D."/>
            <person name="Demaegd D."/>
            <person name="Hacine-Gherbi H."/>
            <person name="de Bettignies G."/>
            <person name="Bammens R."/>
            <person name="Borrego C."/>
            <person name="Duvet S."/>
            <person name="Morsomme P."/>
            <person name="Matthijs G."/>
            <person name="Foulquier F."/>
        </authorList>
    </citation>
    <scope>MUTAGENESIS OF ARG-71</scope>
</reference>
<reference key="10">
    <citation type="journal article" date="2013" name="Proc. Natl. Acad. Sci. U.S.A.">
        <title>Newly characterized Golgi-localized family of proteins is involved in calcium and pH homeostasis in yeast and human cells.</title>
        <authorList>
            <person name="Demaegd D."/>
            <person name="Foulquier F."/>
            <person name="Colinet A.S."/>
            <person name="Gremillon L."/>
            <person name="Legrand D."/>
            <person name="Mariot P."/>
            <person name="Peiter E."/>
            <person name="Van Schaftingen E."/>
            <person name="Matthijs G."/>
            <person name="Morsomme P."/>
        </authorList>
    </citation>
    <scope>FUNCTION IN CALCIUM HOMEOSTASIS</scope>
    <scope>SUBCELLULAR LOCATION</scope>
    <scope>DISRUPTION PHENOTYPE</scope>
</reference>
<reference key="11">
    <citation type="journal article" date="2016" name="Hum. Mol. Genet.">
        <title>Glycosylation abnormalities in Gdt1p/TMEM165 deficient cells result from a defect in Golgi manganese homeostasis.</title>
        <authorList>
            <person name="Potelle S."/>
            <person name="Morelle W."/>
            <person name="Dulary E."/>
            <person name="Duvet S."/>
            <person name="Vicogne D."/>
            <person name="Spriet C."/>
            <person name="Krzewinski-Recchi M.A."/>
            <person name="Morsomme P."/>
            <person name="Jaeken J."/>
            <person name="Matthijs G."/>
            <person name="De Bettignies G."/>
            <person name="Foulquier F."/>
        </authorList>
    </citation>
    <scope>FUNCTION</scope>
    <scope>DISRUPTION PHENOTYPE</scope>
</reference>
<reference key="12">
    <citation type="journal article" date="2016" name="Sci. Rep.">
        <title>Yeast Gdt1 is a Golgi-localized calcium transporter required for stress-induced calcium signaling and protein glycosylation.</title>
        <authorList>
            <person name="Colinet A.S."/>
            <person name="Sengottaiyan P."/>
            <person name="Deschamps A."/>
            <person name="Colsoul M.L."/>
            <person name="Thines L."/>
            <person name="Demaegd D."/>
            <person name="Duchene M.C."/>
            <person name="Foulquier F."/>
            <person name="Hols P."/>
            <person name="Morsomme P."/>
        </authorList>
    </citation>
    <scope>FUNCTION</scope>
    <scope>TRANSPORTER ACTIVITY</scope>
</reference>
<reference key="13">
    <citation type="journal article" date="2023" name="J. Biol. Chem.">
        <title>The yeast Gdt1 protein mediates the exchange of H+ for Ca2+ and Mn2+ influencing the Golgi pH.</title>
        <authorList>
            <person name="Deschamps A."/>
            <person name="Thines L."/>
            <person name="Colinet A.S."/>
            <person name="Stribny J."/>
            <person name="Morsomme P."/>
        </authorList>
    </citation>
    <scope>FUNCTION</scope>
    <scope>TRANSPORTER ACTIVITY</scope>
</reference>
<keyword id="KW-0050">Antiport</keyword>
<keyword id="KW-0333">Golgi apparatus</keyword>
<keyword id="KW-0472">Membrane</keyword>
<keyword id="KW-1185">Reference proteome</keyword>
<keyword id="KW-0812">Transmembrane</keyword>
<keyword id="KW-1133">Transmembrane helix</keyword>
<keyword id="KW-0813">Transport</keyword>
<organism>
    <name type="scientific">Saccharomyces cerevisiae (strain ATCC 204508 / S288c)</name>
    <name type="common">Baker's yeast</name>
    <dbReference type="NCBI Taxonomy" id="559292"/>
    <lineage>
        <taxon>Eukaryota</taxon>
        <taxon>Fungi</taxon>
        <taxon>Dikarya</taxon>
        <taxon>Ascomycota</taxon>
        <taxon>Saccharomycotina</taxon>
        <taxon>Saccharomycetes</taxon>
        <taxon>Saccharomycetales</taxon>
        <taxon>Saccharomycetaceae</taxon>
        <taxon>Saccharomyces</taxon>
    </lineage>
</organism>
<evidence type="ECO:0000255" key="1"/>
<evidence type="ECO:0000269" key="2">
    <source>
    </source>
</evidence>
<evidence type="ECO:0000269" key="3">
    <source>
    </source>
</evidence>
<evidence type="ECO:0000269" key="4">
    <source>
    </source>
</evidence>
<evidence type="ECO:0000269" key="5">
    <source>
    </source>
</evidence>
<evidence type="ECO:0000269" key="6">
    <source>
    </source>
</evidence>
<evidence type="ECO:0000269" key="7">
    <source>
    </source>
</evidence>
<evidence type="ECO:0000269" key="8">
    <source>
    </source>
</evidence>
<evidence type="ECO:0000303" key="9">
    <source>
    </source>
</evidence>
<evidence type="ECO:0000305" key="10"/>
<evidence type="ECO:0000305" key="11">
    <source>
    </source>
</evidence>
<evidence type="ECO:0000305" key="12">
    <source>
    </source>
</evidence>
<gene>
    <name evidence="9" type="primary">GDT1</name>
    <name type="ordered locus">YBR187W</name>
    <name type="ORF">YBR1310</name>
</gene>